<feature type="chain" id="PRO_1000022236" description="Potassium-transporting ATPase potassium-binding subunit">
    <location>
        <begin position="1"/>
        <end position="556"/>
    </location>
</feature>
<feature type="transmembrane region" description="Helical" evidence="1">
    <location>
        <begin position="6"/>
        <end position="26"/>
    </location>
</feature>
<feature type="transmembrane region" description="Helical" evidence="1">
    <location>
        <begin position="65"/>
        <end position="85"/>
    </location>
</feature>
<feature type="transmembrane region" description="Helical" evidence="1">
    <location>
        <begin position="133"/>
        <end position="153"/>
    </location>
</feature>
<feature type="transmembrane region" description="Helical" evidence="1">
    <location>
        <begin position="176"/>
        <end position="196"/>
    </location>
</feature>
<feature type="transmembrane region" description="Helical" evidence="1">
    <location>
        <begin position="249"/>
        <end position="269"/>
    </location>
</feature>
<feature type="transmembrane region" description="Helical" evidence="1">
    <location>
        <begin position="283"/>
        <end position="303"/>
    </location>
</feature>
<feature type="transmembrane region" description="Helical" evidence="1">
    <location>
        <begin position="378"/>
        <end position="398"/>
    </location>
</feature>
<feature type="transmembrane region" description="Helical" evidence="1">
    <location>
        <begin position="419"/>
        <end position="439"/>
    </location>
</feature>
<feature type="transmembrane region" description="Helical" evidence="1">
    <location>
        <begin position="483"/>
        <end position="503"/>
    </location>
</feature>
<feature type="transmembrane region" description="Helical" evidence="1">
    <location>
        <begin position="526"/>
        <end position="546"/>
    </location>
</feature>
<gene>
    <name evidence="1" type="primary">kdpA</name>
    <name type="ordered locus">Mmcs_4226</name>
</gene>
<organism>
    <name type="scientific">Mycobacterium sp. (strain MCS)</name>
    <dbReference type="NCBI Taxonomy" id="164756"/>
    <lineage>
        <taxon>Bacteria</taxon>
        <taxon>Bacillati</taxon>
        <taxon>Actinomycetota</taxon>
        <taxon>Actinomycetes</taxon>
        <taxon>Mycobacteriales</taxon>
        <taxon>Mycobacteriaceae</taxon>
        <taxon>Mycobacterium</taxon>
    </lineage>
</organism>
<sequence>MSTTTAGILFALSLALALAAVHVPLGDYMYRVYASEKHWRAERVAYRIIGADPAAEQGWGSYARSVLAFSAVSILFLFGLQLLQGRLPLHLNDPATEMTPALAWNTAVSFVTNTNWQAYSGESTQGHLVQMAGLSVQNFVSAAVGMAVAMAFVRGLARRDTGELGNFWVDLIRGSLRILLPLSIIGAIILVSGGVIQNFALHDTVVSTLSGAQQTIPGGPVASQEAIKELGTNGGGFFNANSAHPFENPTTWTNWVEIFLLSCIAFSLPRTFGRMVGSRKQGAAILAVMAVIATLSLSLMMLFQSQTHGTVPTAVGSATEGVEQRFGVADSAVFADLTTLTSTGAVDSFHDSYTSLGGLMTLFNMQLGEVAPGGVGSGLYSMLVLAVITVFVAGLMVGRTPEYLGKKITPREIKLAATYFLVTPLIVLIGTAVAMALPGQRDGMLNTGPHGLSEVLYAFTSAGNNNGSAFAGLSVNTEWYNTALGLAMVFGRFLPIILVLALAGSFARQGRTPESVGTLPTHRPQFVGMVTGVTLILVALTFLPVLALGPLAEGLH</sequence>
<evidence type="ECO:0000255" key="1">
    <source>
        <dbReference type="HAMAP-Rule" id="MF_00275"/>
    </source>
</evidence>
<comment type="function">
    <text evidence="1">Part of the high-affinity ATP-driven potassium transport (or Kdp) system, which catalyzes the hydrolysis of ATP coupled with the electrogenic transport of potassium into the cytoplasm. This subunit binds the extracellular potassium ions and delivers the ions to the membrane domain of KdpB through an intramembrane tunnel.</text>
</comment>
<comment type="subunit">
    <text evidence="1">The system is composed of three essential subunits: KdpA, KdpB and KdpC.</text>
</comment>
<comment type="subcellular location">
    <subcellularLocation>
        <location evidence="1">Cell membrane</location>
        <topology evidence="1">Multi-pass membrane protein</topology>
    </subcellularLocation>
</comment>
<comment type="similarity">
    <text evidence="1">Belongs to the KdpA family.</text>
</comment>
<name>KDPA_MYCSS</name>
<reference key="1">
    <citation type="submission" date="2006-06" db="EMBL/GenBank/DDBJ databases">
        <title>Complete sequence of chromosome of Mycobacterium sp. MCS.</title>
        <authorList>
            <consortium name="US DOE Joint Genome Institute"/>
            <person name="Copeland A."/>
            <person name="Lucas S."/>
            <person name="Lapidus A."/>
            <person name="Barry K."/>
            <person name="Detter J.C."/>
            <person name="Glavina del Rio T."/>
            <person name="Hammon N."/>
            <person name="Israni S."/>
            <person name="Dalin E."/>
            <person name="Tice H."/>
            <person name="Pitluck S."/>
            <person name="Martinez M."/>
            <person name="Schmutz J."/>
            <person name="Larimer F."/>
            <person name="Land M."/>
            <person name="Hauser L."/>
            <person name="Kyrpides N."/>
            <person name="Kim E."/>
            <person name="Miller C.D."/>
            <person name="Hughes J.E."/>
            <person name="Anderson A.J."/>
            <person name="Sims R.C."/>
            <person name="Richardson P."/>
        </authorList>
    </citation>
    <scope>NUCLEOTIDE SEQUENCE [LARGE SCALE GENOMIC DNA]</scope>
    <source>
        <strain>MCS</strain>
    </source>
</reference>
<accession>Q1B453</accession>
<dbReference type="EMBL" id="CP000384">
    <property type="protein sequence ID" value="ABG10331.1"/>
    <property type="molecule type" value="Genomic_DNA"/>
</dbReference>
<dbReference type="SMR" id="Q1B453"/>
<dbReference type="KEGG" id="mmc:Mmcs_4226"/>
<dbReference type="HOGENOM" id="CLU_018614_3_0_11"/>
<dbReference type="BioCyc" id="MSP164756:G1G6O-4315-MONOMER"/>
<dbReference type="GO" id="GO:0005886">
    <property type="term" value="C:plasma membrane"/>
    <property type="evidence" value="ECO:0007669"/>
    <property type="project" value="UniProtKB-SubCell"/>
</dbReference>
<dbReference type="GO" id="GO:0008556">
    <property type="term" value="F:P-type potassium transmembrane transporter activity"/>
    <property type="evidence" value="ECO:0007669"/>
    <property type="project" value="InterPro"/>
</dbReference>
<dbReference type="GO" id="GO:0030955">
    <property type="term" value="F:potassium ion binding"/>
    <property type="evidence" value="ECO:0007669"/>
    <property type="project" value="UniProtKB-UniRule"/>
</dbReference>
<dbReference type="HAMAP" id="MF_00275">
    <property type="entry name" value="KdpA"/>
    <property type="match status" value="1"/>
</dbReference>
<dbReference type="InterPro" id="IPR004623">
    <property type="entry name" value="KdpA"/>
</dbReference>
<dbReference type="NCBIfam" id="TIGR00680">
    <property type="entry name" value="kdpA"/>
    <property type="match status" value="1"/>
</dbReference>
<dbReference type="PANTHER" id="PTHR30607">
    <property type="entry name" value="POTASSIUM-TRANSPORTING ATPASE A CHAIN"/>
    <property type="match status" value="1"/>
</dbReference>
<dbReference type="PANTHER" id="PTHR30607:SF2">
    <property type="entry name" value="POTASSIUM-TRANSPORTING ATPASE POTASSIUM-BINDING SUBUNIT"/>
    <property type="match status" value="1"/>
</dbReference>
<dbReference type="Pfam" id="PF03814">
    <property type="entry name" value="KdpA"/>
    <property type="match status" value="1"/>
</dbReference>
<dbReference type="PIRSF" id="PIRSF001294">
    <property type="entry name" value="K_ATPaseA"/>
    <property type="match status" value="1"/>
</dbReference>
<proteinExistence type="inferred from homology"/>
<protein>
    <recommendedName>
        <fullName evidence="1">Potassium-transporting ATPase potassium-binding subunit</fullName>
    </recommendedName>
    <alternativeName>
        <fullName evidence="1">ATP phosphohydrolase [potassium-transporting] A chain</fullName>
    </alternativeName>
    <alternativeName>
        <fullName evidence="1">Potassium-binding and translocating subunit A</fullName>
    </alternativeName>
    <alternativeName>
        <fullName evidence="1">Potassium-translocating ATPase A chain</fullName>
    </alternativeName>
</protein>
<keyword id="KW-1003">Cell membrane</keyword>
<keyword id="KW-0406">Ion transport</keyword>
<keyword id="KW-0472">Membrane</keyword>
<keyword id="KW-0630">Potassium</keyword>
<keyword id="KW-0633">Potassium transport</keyword>
<keyword id="KW-0812">Transmembrane</keyword>
<keyword id="KW-1133">Transmembrane helix</keyword>
<keyword id="KW-0813">Transport</keyword>